<reference key="1">
    <citation type="journal article" date="2006" name="Appl. Environ. Microbiol.">
        <title>Complete genome sequence of the marine, chemolithoautotrophic, ammonia-oxidizing bacterium Nitrosococcus oceani ATCC 19707.</title>
        <authorList>
            <person name="Klotz M.G."/>
            <person name="Arp D.J."/>
            <person name="Chain P.S.G."/>
            <person name="El-Sheikh A.F."/>
            <person name="Hauser L.J."/>
            <person name="Hommes N.G."/>
            <person name="Larimer F.W."/>
            <person name="Malfatti S.A."/>
            <person name="Norton J.M."/>
            <person name="Poret-Peterson A.T."/>
            <person name="Vergez L.M."/>
            <person name="Ward B.B."/>
        </authorList>
    </citation>
    <scope>NUCLEOTIDE SEQUENCE [LARGE SCALE GENOMIC DNA]</scope>
    <source>
        <strain>ATCC 19707 / BCRC 17464 / JCM 30415 / NCIMB 11848 / C-107</strain>
    </source>
</reference>
<organism>
    <name type="scientific">Nitrosococcus oceani (strain ATCC 19707 / BCRC 17464 / JCM 30415 / NCIMB 11848 / C-107)</name>
    <dbReference type="NCBI Taxonomy" id="323261"/>
    <lineage>
        <taxon>Bacteria</taxon>
        <taxon>Pseudomonadati</taxon>
        <taxon>Pseudomonadota</taxon>
        <taxon>Gammaproteobacteria</taxon>
        <taxon>Chromatiales</taxon>
        <taxon>Chromatiaceae</taxon>
        <taxon>Nitrosococcus</taxon>
    </lineage>
</organism>
<proteinExistence type="inferred from homology"/>
<protein>
    <recommendedName>
        <fullName evidence="1">UPF0182 protein Noc_0961</fullName>
    </recommendedName>
</protein>
<comment type="subcellular location">
    <subcellularLocation>
        <location evidence="1">Cell membrane</location>
        <topology evidence="1">Multi-pass membrane protein</topology>
    </subcellularLocation>
</comment>
<comment type="similarity">
    <text evidence="1">Belongs to the UPF0182 family.</text>
</comment>
<accession>Q3JCH4</accession>
<name>Y961_NITOC</name>
<gene>
    <name type="ordered locus">Noc_0961</name>
</gene>
<sequence length="872" mass="101694">MSRWKRRFLILGLSIVVLAVFLLIAGFEGIPFLVDLWWFSAQDYGFYFWQRALYQLVVFIQVSIVFFLIFFVNFWVASHYLGSERPADIPPGAPRKKFKNLFFRFQTGSLWIYTPLSLVLSIIIAWPLFQQWESFLLYLVAPDMGIQDPAYGKNISYYLFSFPIYVLILQRLLISFLLLLASLTLFYWIENRLLSQHGKRLPTGAKWHLSILVLMVFFIEIWDFFLQRNGLVYSEAHQPLFSGPGFVEMRVILPFIWLSMFFLLGIAFFLLLFIHKRKGLKTLAVFSLLFILSLGARHFHFLHWATQEYIVKPNELSIQKPFIENSIKATLDAYKLSNVEVRKFERKKALKNIFNAKVQDLLHNVPVWDKELVGQVYRQLQQLRTYYGFPAENVDRYMINGKKQQVFLGARELNYDKLPSGAQKWVNEHLLYTHGYGLAMSSAGQGQGEASMDWFIRGIPPESDEGFNIKQPGIYYGRGSYRYAIAPNENREFDYPKGNANVMTDYQGKGGVSLSSLFEKYIFSVYFQDKDIFFTTQTYDKSKILFRRNIIERIETLTPYLLLDAAPYLVATTEGLYWIQDAYTASTWYPNADVLGLMRFEFPIPPKGSEKINYIRNSVKIVVDAYHGTVNYYIFDSSDPIIQAYSRIYPGLFKPKEQMPEDIRAHIRYPKDLFEIQMGIYAKYHQTDLEIFYQQEDMWTFAQKYNRESETRLRPYYLTLDLIEENRLDFLLFLPMIVKGQDNMRAMLVAGSDDPYYGKLIAYSFPKGELVFGPAQINAVINEDPKVSAQFTLWNQDDSKVVLGDMIIMPVDQVILYIQPVFLTIKDDVRIPKLERIIISDGRSVVMEPTLMEAYAKLKERIETEGAEGESH</sequence>
<evidence type="ECO:0000255" key="1">
    <source>
        <dbReference type="HAMAP-Rule" id="MF_01600"/>
    </source>
</evidence>
<feature type="chain" id="PRO_5000104635" description="UPF0182 protein Noc_0961">
    <location>
        <begin position="1"/>
        <end position="872"/>
    </location>
</feature>
<feature type="transmembrane region" description="Helical" evidence="1">
    <location>
        <begin position="8"/>
        <end position="28"/>
    </location>
</feature>
<feature type="transmembrane region" description="Helical" evidence="1">
    <location>
        <begin position="56"/>
        <end position="76"/>
    </location>
</feature>
<feature type="transmembrane region" description="Helical" evidence="1">
    <location>
        <begin position="109"/>
        <end position="129"/>
    </location>
</feature>
<feature type="transmembrane region" description="Helical" evidence="1">
    <location>
        <begin position="159"/>
        <end position="179"/>
    </location>
</feature>
<feature type="transmembrane region" description="Helical" evidence="1">
    <location>
        <begin position="207"/>
        <end position="227"/>
    </location>
</feature>
<feature type="transmembrane region" description="Helical" evidence="1">
    <location>
        <begin position="254"/>
        <end position="274"/>
    </location>
</feature>
<feature type="transmembrane region" description="Helical" evidence="1">
    <location>
        <begin position="282"/>
        <end position="302"/>
    </location>
</feature>
<keyword id="KW-1003">Cell membrane</keyword>
<keyword id="KW-0472">Membrane</keyword>
<keyword id="KW-1185">Reference proteome</keyword>
<keyword id="KW-0812">Transmembrane</keyword>
<keyword id="KW-1133">Transmembrane helix</keyword>
<dbReference type="EMBL" id="CP000127">
    <property type="protein sequence ID" value="ABA57472.1"/>
    <property type="molecule type" value="Genomic_DNA"/>
</dbReference>
<dbReference type="RefSeq" id="WP_002809308.1">
    <property type="nucleotide sequence ID" value="NC_007484.1"/>
</dbReference>
<dbReference type="SMR" id="Q3JCH4"/>
<dbReference type="KEGG" id="noc:Noc_0961"/>
<dbReference type="eggNOG" id="COG1615">
    <property type="taxonomic scope" value="Bacteria"/>
</dbReference>
<dbReference type="HOGENOM" id="CLU_007733_0_0_6"/>
<dbReference type="InParanoid" id="Q3JCH4"/>
<dbReference type="Proteomes" id="UP000006838">
    <property type="component" value="Chromosome"/>
</dbReference>
<dbReference type="GO" id="GO:0005576">
    <property type="term" value="C:extracellular region"/>
    <property type="evidence" value="ECO:0007669"/>
    <property type="project" value="TreeGrafter"/>
</dbReference>
<dbReference type="GO" id="GO:0005886">
    <property type="term" value="C:plasma membrane"/>
    <property type="evidence" value="ECO:0007669"/>
    <property type="project" value="UniProtKB-SubCell"/>
</dbReference>
<dbReference type="HAMAP" id="MF_01600">
    <property type="entry name" value="UPF0182"/>
    <property type="match status" value="1"/>
</dbReference>
<dbReference type="InterPro" id="IPR005372">
    <property type="entry name" value="UPF0182"/>
</dbReference>
<dbReference type="PANTHER" id="PTHR39344">
    <property type="entry name" value="UPF0182 PROTEIN SLL1060"/>
    <property type="match status" value="1"/>
</dbReference>
<dbReference type="PANTHER" id="PTHR39344:SF1">
    <property type="entry name" value="UPF0182 PROTEIN SLL1060"/>
    <property type="match status" value="1"/>
</dbReference>
<dbReference type="Pfam" id="PF03699">
    <property type="entry name" value="UPF0182"/>
    <property type="match status" value="1"/>
</dbReference>